<reference evidence="6" key="1">
    <citation type="journal article" date="2009" name="PLoS ONE">
        <title>A novel puf-A gene predicted from evolutionary analysis is involved in the development of eyes and primordial germ-cells.</title>
        <authorList>
            <person name="Kuo M.W."/>
            <person name="Wang S.H."/>
            <person name="Chang J.C."/>
            <person name="Chang C.H."/>
            <person name="Huang L.J."/>
            <person name="Lin H.H."/>
            <person name="Yu A.L."/>
            <person name="Li W.H."/>
            <person name="Yu J."/>
        </authorList>
    </citation>
    <scope>NUCLEOTIDE SEQUENCE [MRNA]</scope>
    <scope>FUNCTION</scope>
    <scope>TISSUE SPECIFICITY</scope>
    <scope>DEVELOPMENTAL STAGE</scope>
    <scope>DISRUPTION PHENOTYPE</scope>
</reference>
<reference evidence="7" key="2">
    <citation type="journal article" date="2013" name="Nature">
        <title>The zebrafish reference genome sequence and its relationship to the human genome.</title>
        <authorList>
            <person name="Howe K."/>
            <person name="Clark M.D."/>
            <person name="Torroja C.F."/>
            <person name="Torrance J."/>
            <person name="Berthelot C."/>
            <person name="Muffato M."/>
            <person name="Collins J.E."/>
            <person name="Humphray S."/>
            <person name="McLaren K."/>
            <person name="Matthews L."/>
            <person name="McLaren S."/>
            <person name="Sealy I."/>
            <person name="Caccamo M."/>
            <person name="Churcher C."/>
            <person name="Scott C."/>
            <person name="Barrett J.C."/>
            <person name="Koch R."/>
            <person name="Rauch G.J."/>
            <person name="White S."/>
            <person name="Chow W."/>
            <person name="Kilian B."/>
            <person name="Quintais L.T."/>
            <person name="Guerra-Assuncao J.A."/>
            <person name="Zhou Y."/>
            <person name="Gu Y."/>
            <person name="Yen J."/>
            <person name="Vogel J.H."/>
            <person name="Eyre T."/>
            <person name="Redmond S."/>
            <person name="Banerjee R."/>
            <person name="Chi J."/>
            <person name="Fu B."/>
            <person name="Langley E."/>
            <person name="Maguire S.F."/>
            <person name="Laird G.K."/>
            <person name="Lloyd D."/>
            <person name="Kenyon E."/>
            <person name="Donaldson S."/>
            <person name="Sehra H."/>
            <person name="Almeida-King J."/>
            <person name="Loveland J."/>
            <person name="Trevanion S."/>
            <person name="Jones M."/>
            <person name="Quail M."/>
            <person name="Willey D."/>
            <person name="Hunt A."/>
            <person name="Burton J."/>
            <person name="Sims S."/>
            <person name="McLay K."/>
            <person name="Plumb B."/>
            <person name="Davis J."/>
            <person name="Clee C."/>
            <person name="Oliver K."/>
            <person name="Clark R."/>
            <person name="Riddle C."/>
            <person name="Elliot D."/>
            <person name="Threadgold G."/>
            <person name="Harden G."/>
            <person name="Ware D."/>
            <person name="Begum S."/>
            <person name="Mortimore B."/>
            <person name="Kerry G."/>
            <person name="Heath P."/>
            <person name="Phillimore B."/>
            <person name="Tracey A."/>
            <person name="Corby N."/>
            <person name="Dunn M."/>
            <person name="Johnson C."/>
            <person name="Wood J."/>
            <person name="Clark S."/>
            <person name="Pelan S."/>
            <person name="Griffiths G."/>
            <person name="Smith M."/>
            <person name="Glithero R."/>
            <person name="Howden P."/>
            <person name="Barker N."/>
            <person name="Lloyd C."/>
            <person name="Stevens C."/>
            <person name="Harley J."/>
            <person name="Holt K."/>
            <person name="Panagiotidis G."/>
            <person name="Lovell J."/>
            <person name="Beasley H."/>
            <person name="Henderson C."/>
            <person name="Gordon D."/>
            <person name="Auger K."/>
            <person name="Wright D."/>
            <person name="Collins J."/>
            <person name="Raisen C."/>
            <person name="Dyer L."/>
            <person name="Leung K."/>
            <person name="Robertson L."/>
            <person name="Ambridge K."/>
            <person name="Leongamornlert D."/>
            <person name="McGuire S."/>
            <person name="Gilderthorp R."/>
            <person name="Griffiths C."/>
            <person name="Manthravadi D."/>
            <person name="Nichol S."/>
            <person name="Barker G."/>
            <person name="Whitehead S."/>
            <person name="Kay M."/>
            <person name="Brown J."/>
            <person name="Murnane C."/>
            <person name="Gray E."/>
            <person name="Humphries M."/>
            <person name="Sycamore N."/>
            <person name="Barker D."/>
            <person name="Saunders D."/>
            <person name="Wallis J."/>
            <person name="Babbage A."/>
            <person name="Hammond S."/>
            <person name="Mashreghi-Mohammadi M."/>
            <person name="Barr L."/>
            <person name="Martin S."/>
            <person name="Wray P."/>
            <person name="Ellington A."/>
            <person name="Matthews N."/>
            <person name="Ellwood M."/>
            <person name="Woodmansey R."/>
            <person name="Clark G."/>
            <person name="Cooper J."/>
            <person name="Tromans A."/>
            <person name="Grafham D."/>
            <person name="Skuce C."/>
            <person name="Pandian R."/>
            <person name="Andrews R."/>
            <person name="Harrison E."/>
            <person name="Kimberley A."/>
            <person name="Garnett J."/>
            <person name="Fosker N."/>
            <person name="Hall R."/>
            <person name="Garner P."/>
            <person name="Kelly D."/>
            <person name="Bird C."/>
            <person name="Palmer S."/>
            <person name="Gehring I."/>
            <person name="Berger A."/>
            <person name="Dooley C.M."/>
            <person name="Ersan-Urun Z."/>
            <person name="Eser C."/>
            <person name="Geiger H."/>
            <person name="Geisler M."/>
            <person name="Karotki L."/>
            <person name="Kirn A."/>
            <person name="Konantz J."/>
            <person name="Konantz M."/>
            <person name="Oberlander M."/>
            <person name="Rudolph-Geiger S."/>
            <person name="Teucke M."/>
            <person name="Lanz C."/>
            <person name="Raddatz G."/>
            <person name="Osoegawa K."/>
            <person name="Zhu B."/>
            <person name="Rapp A."/>
            <person name="Widaa S."/>
            <person name="Langford C."/>
            <person name="Yang F."/>
            <person name="Schuster S.C."/>
            <person name="Carter N.P."/>
            <person name="Harrow J."/>
            <person name="Ning Z."/>
            <person name="Herrero J."/>
            <person name="Searle S.M."/>
            <person name="Enright A."/>
            <person name="Geisler R."/>
            <person name="Plasterk R.H."/>
            <person name="Lee C."/>
            <person name="Westerfield M."/>
            <person name="de Jong P.J."/>
            <person name="Zon L.I."/>
            <person name="Postlethwait J.H."/>
            <person name="Nusslein-Volhard C."/>
            <person name="Hubbard T.J."/>
            <person name="Roest Crollius H."/>
            <person name="Rogers J."/>
            <person name="Stemple D.L."/>
        </authorList>
    </citation>
    <scope>NUCLEOTIDE SEQUENCE [LARGE SCALE GENOMIC DNA]</scope>
    <source>
        <strain evidence="7">Tuebingen</strain>
    </source>
</reference>
<dbReference type="EMBL" id="CR628386">
    <property type="status" value="NOT_ANNOTATED_CDS"/>
    <property type="molecule type" value="Genomic_DNA"/>
</dbReference>
<dbReference type="RefSeq" id="NP_001340777.1">
    <property type="nucleotide sequence ID" value="NM_001353848.1"/>
</dbReference>
<dbReference type="RefSeq" id="XP_003199363.1">
    <property type="nucleotide sequence ID" value="XM_003199315.3"/>
</dbReference>
<dbReference type="RefSeq" id="XP_068079898.1">
    <property type="nucleotide sequence ID" value="XM_068223797.1"/>
</dbReference>
<dbReference type="SMR" id="X1WGX5"/>
<dbReference type="FunCoup" id="X1WGX5">
    <property type="interactions" value="2196"/>
</dbReference>
<dbReference type="STRING" id="7955.ENSDARP00000153216"/>
<dbReference type="PaxDb" id="7955-ENSDARP00000129484"/>
<dbReference type="Ensembl" id="ENSDART00000154037">
    <property type="protein sequence ID" value="ENSDARP00000129484"/>
    <property type="gene ID" value="ENSDARG00000087779"/>
</dbReference>
<dbReference type="Ensembl" id="ENSDART00000189109">
    <property type="protein sequence ID" value="ENSDARP00000153216"/>
    <property type="gene ID" value="ENSDARG00000087779"/>
</dbReference>
<dbReference type="GeneID" id="553068"/>
<dbReference type="eggNOG" id="KOG2050">
    <property type="taxonomic scope" value="Eukaryota"/>
</dbReference>
<dbReference type="HOGENOM" id="CLU_013994_0_1_1"/>
<dbReference type="InParanoid" id="X1WGX5"/>
<dbReference type="OMA" id="YGPEFSI"/>
<dbReference type="OrthoDB" id="497380at2759"/>
<dbReference type="PRO" id="PR:X1WGX5"/>
<dbReference type="Proteomes" id="UP000000437">
    <property type="component" value="Chromosome 10"/>
</dbReference>
<dbReference type="Bgee" id="ENSDARG00000087779">
    <property type="expression patterns" value="Expressed in presomitic mesoderm and 46 other cell types or tissues"/>
</dbReference>
<dbReference type="ExpressionAtlas" id="X1WGX5">
    <property type="expression patterns" value="baseline and differential"/>
</dbReference>
<dbReference type="GO" id="GO:0005694">
    <property type="term" value="C:chromosome"/>
    <property type="evidence" value="ECO:0000250"/>
    <property type="project" value="UniProtKB"/>
</dbReference>
<dbReference type="GO" id="GO:0005730">
    <property type="term" value="C:nucleolus"/>
    <property type="evidence" value="ECO:0000318"/>
    <property type="project" value="GO_Central"/>
</dbReference>
<dbReference type="GO" id="GO:0005654">
    <property type="term" value="C:nucleoplasm"/>
    <property type="evidence" value="ECO:0007669"/>
    <property type="project" value="UniProtKB-SubCell"/>
</dbReference>
<dbReference type="GO" id="GO:0003677">
    <property type="term" value="F:DNA binding"/>
    <property type="evidence" value="ECO:0007669"/>
    <property type="project" value="UniProtKB-KW"/>
</dbReference>
<dbReference type="GO" id="GO:0003729">
    <property type="term" value="F:mRNA binding"/>
    <property type="evidence" value="ECO:0000318"/>
    <property type="project" value="GO_Central"/>
</dbReference>
<dbReference type="GO" id="GO:0008354">
    <property type="term" value="P:germ cell migration"/>
    <property type="evidence" value="ECO:0000315"/>
    <property type="project" value="ZFIN"/>
</dbReference>
<dbReference type="GO" id="GO:0006417">
    <property type="term" value="P:regulation of translation"/>
    <property type="evidence" value="ECO:0000318"/>
    <property type="project" value="GO_Central"/>
</dbReference>
<dbReference type="FunFam" id="1.25.10.10:FF:000207">
    <property type="entry name" value="Pumilio RNA-binding family member 3"/>
    <property type="match status" value="1"/>
</dbReference>
<dbReference type="FunFam" id="1.25.10.10:FF:001092">
    <property type="entry name" value="Pumilio RNA-binding family member 3"/>
    <property type="match status" value="1"/>
</dbReference>
<dbReference type="Gene3D" id="1.25.10.10">
    <property type="entry name" value="Leucine-rich Repeat Variant"/>
    <property type="match status" value="2"/>
</dbReference>
<dbReference type="InterPro" id="IPR011989">
    <property type="entry name" value="ARM-like"/>
</dbReference>
<dbReference type="InterPro" id="IPR016024">
    <property type="entry name" value="ARM-type_fold"/>
</dbReference>
<dbReference type="InterPro" id="IPR012959">
    <property type="entry name" value="CPL_dom"/>
</dbReference>
<dbReference type="InterPro" id="IPR033133">
    <property type="entry name" value="PUM-HD"/>
</dbReference>
<dbReference type="InterPro" id="IPR040059">
    <property type="entry name" value="PUM3"/>
</dbReference>
<dbReference type="InterPro" id="IPR001313">
    <property type="entry name" value="Pumilio_RNA-bd_rpt"/>
</dbReference>
<dbReference type="PANTHER" id="PTHR13389">
    <property type="entry name" value="PUMILIO HOMOLOG 3"/>
    <property type="match status" value="1"/>
</dbReference>
<dbReference type="PANTHER" id="PTHR13389:SF0">
    <property type="entry name" value="PUMILIO HOMOLOG 3"/>
    <property type="match status" value="1"/>
</dbReference>
<dbReference type="Pfam" id="PF08144">
    <property type="entry name" value="CPL"/>
    <property type="match status" value="1"/>
</dbReference>
<dbReference type="Pfam" id="PF00806">
    <property type="entry name" value="PUF"/>
    <property type="match status" value="2"/>
</dbReference>
<dbReference type="SMART" id="SM00025">
    <property type="entry name" value="Pumilio"/>
    <property type="match status" value="6"/>
</dbReference>
<dbReference type="SUPFAM" id="SSF48371">
    <property type="entry name" value="ARM repeat"/>
    <property type="match status" value="2"/>
</dbReference>
<dbReference type="PROSITE" id="PS50302">
    <property type="entry name" value="PUM"/>
    <property type="match status" value="5"/>
</dbReference>
<dbReference type="PROSITE" id="PS50303">
    <property type="entry name" value="PUM_HD"/>
    <property type="match status" value="1"/>
</dbReference>
<evidence type="ECO:0000250" key="1">
    <source>
        <dbReference type="UniProtKB" id="Q15397"/>
    </source>
</evidence>
<evidence type="ECO:0000255" key="2">
    <source>
        <dbReference type="PROSITE-ProRule" id="PRU00318"/>
    </source>
</evidence>
<evidence type="ECO:0000256" key="3">
    <source>
        <dbReference type="SAM" id="MobiDB-lite"/>
    </source>
</evidence>
<evidence type="ECO:0000269" key="4">
    <source>
    </source>
</evidence>
<evidence type="ECO:0000303" key="5">
    <source>
    </source>
</evidence>
<evidence type="ECO:0000305" key="6"/>
<evidence type="ECO:0000312" key="7">
    <source>
        <dbReference type="Proteomes" id="UP000000437"/>
    </source>
</evidence>
<organism evidence="7">
    <name type="scientific">Danio rerio</name>
    <name type="common">Zebrafish</name>
    <name type="synonym">Brachydanio rerio</name>
    <dbReference type="NCBI Taxonomy" id="7955"/>
    <lineage>
        <taxon>Eukaryota</taxon>
        <taxon>Metazoa</taxon>
        <taxon>Chordata</taxon>
        <taxon>Craniata</taxon>
        <taxon>Vertebrata</taxon>
        <taxon>Euteleostomi</taxon>
        <taxon>Actinopterygii</taxon>
        <taxon>Neopterygii</taxon>
        <taxon>Teleostei</taxon>
        <taxon>Ostariophysi</taxon>
        <taxon>Cypriniformes</taxon>
        <taxon>Danionidae</taxon>
        <taxon>Danioninae</taxon>
        <taxon>Danio</taxon>
    </lineage>
</organism>
<name>PUM3_DANRE</name>
<keyword id="KW-0158">Chromosome</keyword>
<keyword id="KW-0238">DNA-binding</keyword>
<keyword id="KW-0539">Nucleus</keyword>
<keyword id="KW-1185">Reference proteome</keyword>
<keyword id="KW-0677">Repeat</keyword>
<keyword id="KW-0694">RNA-binding</keyword>
<sequence length="629" mass="71359">MEGKPRKKSFTPRDGKKPSFKSKGKPGGKPQGKRPFKPHNNDKGKGFRKSGGEGGPQKFNRKPTDGKFAKKRKFPGDRIKQEEGDERKKPKWDEFKQKKKELKLNRQQTDRKESYQIVSRAKQVWEMVRRKDCDKQKRTKLMKELQDLVKGKIKTIAFAHDSTRVLQCFIQFGSDKQRKEVFDELKEHIVELSKSKYARNIVKKFLMYGSKEQVGEVMLAFKGKVRQMLRHSEASSVVEYAYNDKAILSQRLMLTEELYGNTFTVLKSSVCPTLEKVLEANPGKLESILDEMKQILTPMAQKEAVIKHSLVHKVFLDFFEHAPDKQRTEMIESIREAVVYMAHTHDGARVTMHCLWHGTTKDRKVIVKTMKSYIAKFAMGEYAHLVLLAAFDCIDDTKLVKQIIISEMVSSLSEIISNKHGKKVLLYLLSPRDPAHLLPEIIQVLEKGDGNAHSKKDVLIRRKELLEAASPSLLNHLCENAQSMVMDKSCCVVVSDILGSAVGDLRPAMEAVAALADGPLIPGGKDGQLHMAEHPAGHLVLKWLIEQDTKMKDTEREERFSRILLEKVGLENLKTWASVNRGAIILCCLLQSADESVAEEVKAMLKSSIPELQRLQNSKGIEVLLEKLA</sequence>
<gene>
    <name type="primary">pum3</name>
    <name evidence="5" type="synonym">puf-a</name>
</gene>
<accession>X1WGX5</accession>
<feature type="chain" id="PRO_0000435333" description="Pumilio homolog 3">
    <location>
        <begin position="1"/>
        <end position="629"/>
    </location>
</feature>
<feature type="domain" description="PUM-HD" evidence="2">
    <location>
        <begin position="120"/>
        <end position="473"/>
    </location>
</feature>
<feature type="repeat" description="Pumilio 1" evidence="1">
    <location>
        <begin position="160"/>
        <end position="195"/>
    </location>
</feature>
<feature type="repeat" description="Pumilio 2" evidence="1">
    <location>
        <begin position="196"/>
        <end position="231"/>
    </location>
</feature>
<feature type="repeat" description="Pumilio 3" evidence="1">
    <location>
        <begin position="232"/>
        <end position="260"/>
    </location>
</feature>
<feature type="repeat" description="Pumilio 4" evidence="1">
    <location>
        <begin position="272"/>
        <end position="308"/>
    </location>
</feature>
<feature type="repeat" description="Pumilio 5" evidence="1">
    <location>
        <begin position="309"/>
        <end position="344"/>
    </location>
</feature>
<feature type="repeat" description="Pumilio 6" evidence="1">
    <location>
        <begin position="345"/>
        <end position="380"/>
    </location>
</feature>
<feature type="repeat" description="Pumilio 7" evidence="1">
    <location>
        <begin position="381"/>
        <end position="418"/>
    </location>
</feature>
<feature type="repeat" description="Pumilio 8" evidence="1">
    <location>
        <begin position="419"/>
        <end position="487"/>
    </location>
</feature>
<feature type="repeat" description="Pumilio 9" evidence="1">
    <location>
        <begin position="488"/>
        <end position="534"/>
    </location>
</feature>
<feature type="repeat" description="Pumilio 10" evidence="1">
    <location>
        <begin position="535"/>
        <end position="579"/>
    </location>
</feature>
<feature type="repeat" description="Pumilio 11" evidence="1">
    <location>
        <begin position="580"/>
        <end position="618"/>
    </location>
</feature>
<feature type="region of interest" description="Disordered" evidence="3">
    <location>
        <begin position="1"/>
        <end position="92"/>
    </location>
</feature>
<feature type="short sequence motif" description="Nuclear localization signal" evidence="1">
    <location>
        <begin position="88"/>
        <end position="100"/>
    </location>
</feature>
<feature type="compositionally biased region" description="Basic residues" evidence="3">
    <location>
        <begin position="1"/>
        <end position="10"/>
    </location>
</feature>
<feature type="compositionally biased region" description="Basic residues" evidence="3">
    <location>
        <begin position="18"/>
        <end position="37"/>
    </location>
</feature>
<feature type="compositionally biased region" description="Basic and acidic residues" evidence="3">
    <location>
        <begin position="62"/>
        <end position="92"/>
    </location>
</feature>
<feature type="sequence conflict" description="In Ref. 1; no nucleotide entry." evidence="6" ref="1">
    <original>D</original>
    <variation>A</variation>
    <location>
        <position position="85"/>
    </location>
</feature>
<protein>
    <recommendedName>
        <fullName evidence="6">Pumilio homolog 3</fullName>
    </recommendedName>
</protein>
<proteinExistence type="evidence at transcript level"/>
<comment type="function">
    <text evidence="1 4">Inhibits the poly(ADP-ribosyl)ation activity of PARP1 and the degradation of PARP1 by CASP3 following genotoxic stress (By similarity). Binds to double-stranded RNA or DNA without sequence specificity (By similarity). Involved in development of the eye and of primordial germ cells (PubMed:19319195).</text>
</comment>
<comment type="subcellular location">
    <subcellularLocation>
        <location evidence="1">Nucleus</location>
        <location evidence="1">Nucleolus</location>
    </subcellularLocation>
    <subcellularLocation>
        <location evidence="1">Nucleus</location>
        <location evidence="1">Nucleoplasm</location>
    </subcellularLocation>
    <subcellularLocation>
        <location evidence="1">Chromosome</location>
    </subcellularLocation>
</comment>
<comment type="tissue specificity">
    <text evidence="4">In adult, expressed at high levels in eye and ovary and at lower levels in brain, testis and head kidney. In the adult ovary, prominently expressed in early immature follicles.</text>
</comment>
<comment type="developmental stage">
    <text evidence="4">Expressed throughout embryogenesis. In the adult ovary, strong expression detected in primitive stage I ovarian follicles with levels declining sharply and becoming negligible in subsequent stages of oocyte development.</text>
</comment>
<comment type="domain">
    <text evidence="1">A 90 degree bend between Pumilio repeats 3 and 4 gives rise to a L-shaped protein.</text>
</comment>
<comment type="disruption phenotype">
    <text evidence="4">Morpholino knockdown in embryos results in small eyes, small head and brain edema at 1 and 2 days post-fertilization (dpf). At 3 and 5 dpf, mutants exhibit features of an undifferentiated retina with loss of detailed architecture and a significant reduction in eye size. Structures such as the rod and cone layers are not concentrically organized and retinal ganglion cells and plexiform layers are not readily discernible. Mutants also show abnormal primordial germ cell migration.</text>
</comment>